<name>SUB4_TRITO</name>
<protein>
    <recommendedName>
        <fullName>Subtilisin-like protease 4</fullName>
        <ecNumber>3.4.21.-</ecNumber>
    </recommendedName>
</protein>
<feature type="signal peptide" evidence="2">
    <location>
        <begin position="1"/>
        <end position="19"/>
    </location>
</feature>
<feature type="propeptide" id="PRO_0000380792" evidence="1">
    <location>
        <begin position="20"/>
        <end position="118"/>
    </location>
</feature>
<feature type="chain" id="PRO_0000380793" description="Subtilisin-like protease 4">
    <location>
        <begin position="119"/>
        <end position="399"/>
    </location>
</feature>
<feature type="domain" description="Inhibitor I9" evidence="2">
    <location>
        <begin position="38"/>
        <end position="117"/>
    </location>
</feature>
<feature type="domain" description="Peptidase S8" evidence="3">
    <location>
        <begin position="128"/>
        <end position="399"/>
    </location>
</feature>
<feature type="active site" description="Charge relay system" evidence="3">
    <location>
        <position position="160"/>
    </location>
</feature>
<feature type="active site" description="Charge relay system" evidence="3">
    <location>
        <position position="191"/>
    </location>
</feature>
<feature type="active site" description="Charge relay system" evidence="3">
    <location>
        <position position="346"/>
    </location>
</feature>
<feature type="glycosylation site" description="N-linked (GlcNAc...) asparagine" evidence="2">
    <location>
        <position position="102"/>
    </location>
</feature>
<feature type="glycosylation site" description="N-linked (GlcNAc...) asparagine" evidence="2">
    <location>
        <position position="252"/>
    </location>
</feature>
<feature type="glycosylation site" description="N-linked (GlcNAc...) asparagine" evidence="2">
    <location>
        <position position="308"/>
    </location>
</feature>
<feature type="glycosylation site" description="N-linked (GlcNAc...) asparagine" evidence="2">
    <location>
        <position position="395"/>
    </location>
</feature>
<comment type="function">
    <text evidence="1">Secreted subtilisin-like serine protease with keratinolytic activity that contributes to pathogenicity.</text>
</comment>
<comment type="subcellular location">
    <subcellularLocation>
        <location evidence="1">Secreted</location>
    </subcellularLocation>
</comment>
<comment type="similarity">
    <text evidence="4">Belongs to the peptidase S8 family.</text>
</comment>
<proteinExistence type="inferred from homology"/>
<reference key="1">
    <citation type="submission" date="2008-10" db="EMBL/GenBank/DDBJ databases">
        <title>Comparing putative pathogenicity factors between Trichophyton tonsurans and Trichophyton equinum.</title>
        <authorList>
            <person name="Preuett B.L."/>
            <person name="Abdel-Rahman S.M."/>
        </authorList>
    </citation>
    <scope>NUCLEOTIDE SEQUENCE [GENOMIC DNA]</scope>
</reference>
<organism>
    <name type="scientific">Trichophyton tonsurans</name>
    <name type="common">Scalp ringworm fungus</name>
    <dbReference type="NCBI Taxonomy" id="34387"/>
    <lineage>
        <taxon>Eukaryota</taxon>
        <taxon>Fungi</taxon>
        <taxon>Dikarya</taxon>
        <taxon>Ascomycota</taxon>
        <taxon>Pezizomycotina</taxon>
        <taxon>Eurotiomycetes</taxon>
        <taxon>Eurotiomycetidae</taxon>
        <taxon>Onygenales</taxon>
        <taxon>Arthrodermataceae</taxon>
        <taxon>Trichophyton</taxon>
    </lineage>
</organism>
<evidence type="ECO:0000250" key="1"/>
<evidence type="ECO:0000255" key="2"/>
<evidence type="ECO:0000255" key="3">
    <source>
        <dbReference type="PROSITE-ProRule" id="PRU01240"/>
    </source>
</evidence>
<evidence type="ECO:0000305" key="4"/>
<keyword id="KW-0325">Glycoprotein</keyword>
<keyword id="KW-0378">Hydrolase</keyword>
<keyword id="KW-0645">Protease</keyword>
<keyword id="KW-0964">Secreted</keyword>
<keyword id="KW-0720">Serine protease</keyword>
<keyword id="KW-0732">Signal</keyword>
<keyword id="KW-0843">Virulence</keyword>
<keyword id="KW-0865">Zymogen</keyword>
<accession>B8XGQ7</accession>
<dbReference type="EC" id="3.4.21.-"/>
<dbReference type="EMBL" id="FJ348239">
    <property type="protein sequence ID" value="ACL37329.1"/>
    <property type="molecule type" value="Genomic_DNA"/>
</dbReference>
<dbReference type="SMR" id="B8XGQ7"/>
<dbReference type="MEROPS" id="S08.115"/>
<dbReference type="GlyCosmos" id="B8XGQ7">
    <property type="glycosylation" value="4 sites, No reported glycans"/>
</dbReference>
<dbReference type="VEuPathDB" id="FungiDB:TESG_04167"/>
<dbReference type="GO" id="GO:0005576">
    <property type="term" value="C:extracellular region"/>
    <property type="evidence" value="ECO:0007669"/>
    <property type="project" value="UniProtKB-SubCell"/>
</dbReference>
<dbReference type="GO" id="GO:0004252">
    <property type="term" value="F:serine-type endopeptidase activity"/>
    <property type="evidence" value="ECO:0007669"/>
    <property type="project" value="InterPro"/>
</dbReference>
<dbReference type="GO" id="GO:0006508">
    <property type="term" value="P:proteolysis"/>
    <property type="evidence" value="ECO:0007669"/>
    <property type="project" value="UniProtKB-KW"/>
</dbReference>
<dbReference type="CDD" id="cd04077">
    <property type="entry name" value="Peptidases_S8_PCSK9_ProteinaseK_like"/>
    <property type="match status" value="1"/>
</dbReference>
<dbReference type="FunFam" id="3.40.50.200:FF:000014">
    <property type="entry name" value="Proteinase K"/>
    <property type="match status" value="1"/>
</dbReference>
<dbReference type="Gene3D" id="3.30.70.80">
    <property type="entry name" value="Peptidase S8 propeptide/proteinase inhibitor I9"/>
    <property type="match status" value="1"/>
</dbReference>
<dbReference type="Gene3D" id="3.40.50.200">
    <property type="entry name" value="Peptidase S8/S53 domain"/>
    <property type="match status" value="1"/>
</dbReference>
<dbReference type="InterPro" id="IPR034193">
    <property type="entry name" value="PCSK9_ProteinaseK-like"/>
</dbReference>
<dbReference type="InterPro" id="IPR000209">
    <property type="entry name" value="Peptidase_S8/S53_dom"/>
</dbReference>
<dbReference type="InterPro" id="IPR036852">
    <property type="entry name" value="Peptidase_S8/S53_dom_sf"/>
</dbReference>
<dbReference type="InterPro" id="IPR023828">
    <property type="entry name" value="Peptidase_S8_Ser-AS"/>
</dbReference>
<dbReference type="InterPro" id="IPR050131">
    <property type="entry name" value="Peptidase_S8_subtilisin-like"/>
</dbReference>
<dbReference type="InterPro" id="IPR015500">
    <property type="entry name" value="Peptidase_S8_subtilisin-rel"/>
</dbReference>
<dbReference type="InterPro" id="IPR010259">
    <property type="entry name" value="S8pro/Inhibitor_I9"/>
</dbReference>
<dbReference type="InterPro" id="IPR037045">
    <property type="entry name" value="S8pro/Inhibitor_I9_sf"/>
</dbReference>
<dbReference type="PANTHER" id="PTHR43806:SF11">
    <property type="entry name" value="CEREVISIN-RELATED"/>
    <property type="match status" value="1"/>
</dbReference>
<dbReference type="PANTHER" id="PTHR43806">
    <property type="entry name" value="PEPTIDASE S8"/>
    <property type="match status" value="1"/>
</dbReference>
<dbReference type="Pfam" id="PF05922">
    <property type="entry name" value="Inhibitor_I9"/>
    <property type="match status" value="1"/>
</dbReference>
<dbReference type="Pfam" id="PF00082">
    <property type="entry name" value="Peptidase_S8"/>
    <property type="match status" value="1"/>
</dbReference>
<dbReference type="PRINTS" id="PR00723">
    <property type="entry name" value="SUBTILISIN"/>
</dbReference>
<dbReference type="SUPFAM" id="SSF54897">
    <property type="entry name" value="Protease propeptides/inhibitors"/>
    <property type="match status" value="1"/>
</dbReference>
<dbReference type="SUPFAM" id="SSF52743">
    <property type="entry name" value="Subtilisin-like"/>
    <property type="match status" value="1"/>
</dbReference>
<dbReference type="PROSITE" id="PS51892">
    <property type="entry name" value="SUBTILASE"/>
    <property type="match status" value="1"/>
</dbReference>
<dbReference type="PROSITE" id="PS00138">
    <property type="entry name" value="SUBTILASE_SER"/>
    <property type="match status" value="1"/>
</dbReference>
<sequence length="399" mass="42087">MVCLKTLSVFLAAFAAADARAVFKTQGHKNSEMIPDNYIVVMKDGVSQDDFKAHVSSVASIHSTNKAKRGTNTEGMKREFDIMNWRGYHGHFDRDTLEEILNDSKVDYVEQDQVVRISGLVTQRGAPSWGLGRVSHRQAGSRDYVFDDSAGRGVTIYGVDTGIDINHQDFRGRARWGTNTADRDNADRHGHGTHTASTFAGTAYGIAKNANIVAVKVLGSDGSGSTSGIIAGINYCVQDAQQRGILGKAAMNLSLGGGFSQANNDAVTRAQNAGIFVAVAAGNDNRDARNYSPASAPAVCTVASSTINDSKSSFSNWGPVVDIYAPGSDIIAARPGGGSTTMSGTSMASPHVAGMGAYMIGLGADPRSLCDRLKQLATPAIRNPGSSTTNRLLYNGSGQ</sequence>
<gene>
    <name type="primary">SUB4</name>
</gene>